<comment type="function">
    <text evidence="1">GTPase that plays an essential role in the late steps of ribosome biogenesis.</text>
</comment>
<comment type="subunit">
    <text evidence="1">Associates with the 50S ribosomal subunit.</text>
</comment>
<comment type="similarity">
    <text evidence="1">Belongs to the TRAFAC class TrmE-Era-EngA-EngB-Septin-like GTPase superfamily. EngA (Der) GTPase family.</text>
</comment>
<reference key="1">
    <citation type="submission" date="2008-05" db="EMBL/GenBank/DDBJ databases">
        <title>Genome sequence of Helicobacter pylori from the remote Amazon: traces of Asian ancestry of the first Americans.</title>
        <authorList>
            <person name="Kersulyte D."/>
            <person name="Kalia A."/>
            <person name="Gilman R.H."/>
            <person name="Berg D.E."/>
        </authorList>
    </citation>
    <scope>NUCLEOTIDE SEQUENCE [LARGE SCALE GENOMIC DNA]</scope>
    <source>
        <strain>Shi470</strain>
    </source>
</reference>
<feature type="chain" id="PRO_1000099130" description="GTPase Der">
    <location>
        <begin position="1"/>
        <end position="461"/>
    </location>
</feature>
<feature type="domain" description="EngA-type G 1">
    <location>
        <begin position="9"/>
        <end position="171"/>
    </location>
</feature>
<feature type="domain" description="EngA-type G 2">
    <location>
        <begin position="200"/>
        <end position="371"/>
    </location>
</feature>
<feature type="domain" description="KH-like" evidence="1">
    <location>
        <begin position="372"/>
        <end position="456"/>
    </location>
</feature>
<feature type="binding site" evidence="1">
    <location>
        <begin position="15"/>
        <end position="22"/>
    </location>
    <ligand>
        <name>GTP</name>
        <dbReference type="ChEBI" id="CHEBI:37565"/>
        <label>1</label>
    </ligand>
</feature>
<feature type="binding site" evidence="1">
    <location>
        <begin position="62"/>
        <end position="66"/>
    </location>
    <ligand>
        <name>GTP</name>
        <dbReference type="ChEBI" id="CHEBI:37565"/>
        <label>1</label>
    </ligand>
</feature>
<feature type="binding site" evidence="1">
    <location>
        <begin position="123"/>
        <end position="126"/>
    </location>
    <ligand>
        <name>GTP</name>
        <dbReference type="ChEBI" id="CHEBI:37565"/>
        <label>1</label>
    </ligand>
</feature>
<feature type="binding site" evidence="1">
    <location>
        <begin position="206"/>
        <end position="213"/>
    </location>
    <ligand>
        <name>GTP</name>
        <dbReference type="ChEBI" id="CHEBI:37565"/>
        <label>2</label>
    </ligand>
</feature>
<feature type="binding site" evidence="1">
    <location>
        <begin position="253"/>
        <end position="257"/>
    </location>
    <ligand>
        <name>GTP</name>
        <dbReference type="ChEBI" id="CHEBI:37565"/>
        <label>2</label>
    </ligand>
</feature>
<feature type="binding site" evidence="1">
    <location>
        <begin position="317"/>
        <end position="320"/>
    </location>
    <ligand>
        <name>GTP</name>
        <dbReference type="ChEBI" id="CHEBI:37565"/>
        <label>2</label>
    </ligand>
</feature>
<evidence type="ECO:0000255" key="1">
    <source>
        <dbReference type="HAMAP-Rule" id="MF_00195"/>
    </source>
</evidence>
<sequence length="461" mass="51709">MNTSHKTLKTIAILGQPNVGKSSLFNRLARERIAITSDFAGTTRDINKRKIALNGHEVELLDTGGMAKDALLSKEIKALNLKAAQMSDLILYVVDGKSIPSDEDLKLFREVFKTNPNCFLVINKIDNDKEKERAYAFSSFGMPKSFNISVSHNRGISTLIDAILSALDLNQIIEQDLDADILESLENNAPKEEIKEEEIIQVGIIGRVNVGKSSLLNALTKKERSLVSSVAGTTIDPIDETILIGDQKICFVDTAGIRHRGKILGIEKYALERTQKALEKSHIALLVLDVSAPFVELDEKISSLADKHSLGIILILNKWDIRYAPYEEIMATLKRKFRFLEYAPIITTSCLKTHHIDEIKHKIIEVYECFSKRIPTSLLNSVINQATQKHPLPSDGGKLVKVYYATQFATKPPQISLIMNRPKALHFSYKRYLINTLRKEFNFLGTPLILNAKDKKSAQQN</sequence>
<accession>B2USZ4</accession>
<proteinExistence type="inferred from homology"/>
<organism>
    <name type="scientific">Helicobacter pylori (strain Shi470)</name>
    <dbReference type="NCBI Taxonomy" id="512562"/>
    <lineage>
        <taxon>Bacteria</taxon>
        <taxon>Pseudomonadati</taxon>
        <taxon>Campylobacterota</taxon>
        <taxon>Epsilonproteobacteria</taxon>
        <taxon>Campylobacterales</taxon>
        <taxon>Helicobacteraceae</taxon>
        <taxon>Helicobacter</taxon>
    </lineage>
</organism>
<name>DER_HELPS</name>
<protein>
    <recommendedName>
        <fullName evidence="1">GTPase Der</fullName>
    </recommendedName>
    <alternativeName>
        <fullName evidence="1">GTP-binding protein EngA</fullName>
    </alternativeName>
</protein>
<keyword id="KW-0342">GTP-binding</keyword>
<keyword id="KW-0547">Nucleotide-binding</keyword>
<keyword id="KW-0677">Repeat</keyword>
<keyword id="KW-0690">Ribosome biogenesis</keyword>
<gene>
    <name evidence="1" type="primary">der</name>
    <name type="synonym">engA</name>
    <name type="ordered locus">HPSH_02630</name>
</gene>
<dbReference type="EMBL" id="CP001072">
    <property type="protein sequence ID" value="ACD47976.1"/>
    <property type="molecule type" value="Genomic_DNA"/>
</dbReference>
<dbReference type="RefSeq" id="WP_001097853.1">
    <property type="nucleotide sequence ID" value="NC_010698.2"/>
</dbReference>
<dbReference type="SMR" id="B2USZ4"/>
<dbReference type="KEGG" id="hps:HPSH_02630"/>
<dbReference type="HOGENOM" id="CLU_016077_6_2_7"/>
<dbReference type="GO" id="GO:0005525">
    <property type="term" value="F:GTP binding"/>
    <property type="evidence" value="ECO:0007669"/>
    <property type="project" value="UniProtKB-UniRule"/>
</dbReference>
<dbReference type="GO" id="GO:0043022">
    <property type="term" value="F:ribosome binding"/>
    <property type="evidence" value="ECO:0007669"/>
    <property type="project" value="TreeGrafter"/>
</dbReference>
<dbReference type="GO" id="GO:0042254">
    <property type="term" value="P:ribosome biogenesis"/>
    <property type="evidence" value="ECO:0007669"/>
    <property type="project" value="UniProtKB-KW"/>
</dbReference>
<dbReference type="CDD" id="cd01894">
    <property type="entry name" value="EngA1"/>
    <property type="match status" value="1"/>
</dbReference>
<dbReference type="CDD" id="cd01895">
    <property type="entry name" value="EngA2"/>
    <property type="match status" value="1"/>
</dbReference>
<dbReference type="FunFam" id="3.30.300.20:FF:000004">
    <property type="entry name" value="GTPase Der"/>
    <property type="match status" value="1"/>
</dbReference>
<dbReference type="FunFam" id="3.40.50.300:FF:002598">
    <property type="entry name" value="GTPase Der"/>
    <property type="match status" value="1"/>
</dbReference>
<dbReference type="FunFam" id="3.40.50.300:FF:000494">
    <property type="entry name" value="tRNA modification GTPase MnmE"/>
    <property type="match status" value="1"/>
</dbReference>
<dbReference type="Gene3D" id="3.30.300.20">
    <property type="match status" value="1"/>
</dbReference>
<dbReference type="Gene3D" id="3.40.50.300">
    <property type="entry name" value="P-loop containing nucleotide triphosphate hydrolases"/>
    <property type="match status" value="2"/>
</dbReference>
<dbReference type="HAMAP" id="MF_00195">
    <property type="entry name" value="GTPase_Der"/>
    <property type="match status" value="1"/>
</dbReference>
<dbReference type="InterPro" id="IPR031166">
    <property type="entry name" value="G_ENGA"/>
</dbReference>
<dbReference type="InterPro" id="IPR006073">
    <property type="entry name" value="GTP-bd"/>
</dbReference>
<dbReference type="InterPro" id="IPR016484">
    <property type="entry name" value="GTPase_Der"/>
</dbReference>
<dbReference type="InterPro" id="IPR032859">
    <property type="entry name" value="KH_dom-like"/>
</dbReference>
<dbReference type="InterPro" id="IPR015946">
    <property type="entry name" value="KH_dom-like_a/b"/>
</dbReference>
<dbReference type="InterPro" id="IPR027417">
    <property type="entry name" value="P-loop_NTPase"/>
</dbReference>
<dbReference type="InterPro" id="IPR005225">
    <property type="entry name" value="Small_GTP-bd"/>
</dbReference>
<dbReference type="NCBIfam" id="TIGR03594">
    <property type="entry name" value="GTPase_EngA"/>
    <property type="match status" value="1"/>
</dbReference>
<dbReference type="NCBIfam" id="TIGR00231">
    <property type="entry name" value="small_GTP"/>
    <property type="match status" value="2"/>
</dbReference>
<dbReference type="PANTHER" id="PTHR43834">
    <property type="entry name" value="GTPASE DER"/>
    <property type="match status" value="1"/>
</dbReference>
<dbReference type="PANTHER" id="PTHR43834:SF6">
    <property type="entry name" value="GTPASE DER"/>
    <property type="match status" value="1"/>
</dbReference>
<dbReference type="Pfam" id="PF14714">
    <property type="entry name" value="KH_dom-like"/>
    <property type="match status" value="1"/>
</dbReference>
<dbReference type="Pfam" id="PF01926">
    <property type="entry name" value="MMR_HSR1"/>
    <property type="match status" value="2"/>
</dbReference>
<dbReference type="PIRSF" id="PIRSF006485">
    <property type="entry name" value="GTP-binding_EngA"/>
    <property type="match status" value="1"/>
</dbReference>
<dbReference type="PRINTS" id="PR00326">
    <property type="entry name" value="GTP1OBG"/>
</dbReference>
<dbReference type="SUPFAM" id="SSF52540">
    <property type="entry name" value="P-loop containing nucleoside triphosphate hydrolases"/>
    <property type="match status" value="2"/>
</dbReference>
<dbReference type="PROSITE" id="PS51712">
    <property type="entry name" value="G_ENGA"/>
    <property type="match status" value="2"/>
</dbReference>